<comment type="function">
    <text evidence="1">Catalyzes the reversible isomerization of glucose-6-phosphate to fructose-6-phosphate.</text>
</comment>
<comment type="catalytic activity">
    <reaction evidence="1">
        <text>alpha-D-glucose 6-phosphate = beta-D-fructose 6-phosphate</text>
        <dbReference type="Rhea" id="RHEA:11816"/>
        <dbReference type="ChEBI" id="CHEBI:57634"/>
        <dbReference type="ChEBI" id="CHEBI:58225"/>
        <dbReference type="EC" id="5.3.1.9"/>
    </reaction>
</comment>
<comment type="pathway">
    <text evidence="1">Carbohydrate biosynthesis; gluconeogenesis.</text>
</comment>
<comment type="pathway">
    <text evidence="1">Carbohydrate degradation; glycolysis; D-glyceraldehyde 3-phosphate and glycerone phosphate from D-glucose: step 2/4.</text>
</comment>
<comment type="subcellular location">
    <subcellularLocation>
        <location evidence="1">Cytoplasm</location>
    </subcellularLocation>
</comment>
<comment type="similarity">
    <text evidence="1">Belongs to the GPI family.</text>
</comment>
<name>G6PI1_CHRVO</name>
<proteinExistence type="inferred from homology"/>
<gene>
    <name evidence="1" type="primary">pgi1</name>
    <name type="ordered locus">CV_0149</name>
</gene>
<accession>Q7P1R4</accession>
<sequence>MSELTELPAWQALWDHFAEAKHLHMRDLFAADPGRAERYSLEVGGLFLDYSKNRITDATLLGLMELAREAGLPARIKAMFKGEKINRTENRAVLHVALRNRTNSPIRVDGEDVMPKVNSVLERMGKFAHAVRSGDWLGFTNQPITDIVNIGIGGSDLGPLMVCSALKPFGHPRLNMHFVSNVDGAQLKETLKKVHPETTLFVVESKTFTTQETLTNALTAREWFLSHARDEGAVAKHFVAVSTNQKAVAEFGIDPANMFEFWNWVGGRYSLWSAIGLPIMLYLGEENFTELLNGAHIMDQHFMNAPFEQNMPVLLAMIGVWYINYYGGGSHVIAPYDQYLHRLPAFIQQLDMESNGKQVTLSGQPVDFETAPIIWGETGINGQHAFFQLLHQGTHISPIDLIASLGNRASLPGHHEILLANVFAQAEAFMRGKTADEVRAELAEQGLSGEEMEALVPHKVFGGNRPTNTLLMSRLDPRNLGSLIALYEHKIFVQGVIWHINSFDQWGVELGKQLAKTIHAELTGKLEQAEHDSSTRRLIQLYRKANG</sequence>
<protein>
    <recommendedName>
        <fullName evidence="1">Glucose-6-phosphate isomerase 1</fullName>
        <shortName evidence="1">GPI 1</shortName>
        <ecNumber evidence="1">5.3.1.9</ecNumber>
    </recommendedName>
    <alternativeName>
        <fullName evidence="1">Phosphoglucose isomerase 1</fullName>
        <shortName evidence="1">PGI 1</shortName>
    </alternativeName>
    <alternativeName>
        <fullName evidence="1">Phosphohexose isomerase 1</fullName>
        <shortName evidence="1">PHI 1</shortName>
    </alternativeName>
</protein>
<organism>
    <name type="scientific">Chromobacterium violaceum (strain ATCC 12472 / DSM 30191 / JCM 1249 / CCUG 213 / NBRC 12614 / NCIMB 9131 / NCTC 9757 / MK)</name>
    <dbReference type="NCBI Taxonomy" id="243365"/>
    <lineage>
        <taxon>Bacteria</taxon>
        <taxon>Pseudomonadati</taxon>
        <taxon>Pseudomonadota</taxon>
        <taxon>Betaproteobacteria</taxon>
        <taxon>Neisseriales</taxon>
        <taxon>Chromobacteriaceae</taxon>
        <taxon>Chromobacterium</taxon>
    </lineage>
</organism>
<dbReference type="EC" id="5.3.1.9" evidence="1"/>
<dbReference type="EMBL" id="AE016825">
    <property type="protein sequence ID" value="AAQ57828.1"/>
    <property type="molecule type" value="Genomic_DNA"/>
</dbReference>
<dbReference type="RefSeq" id="WP_011133704.1">
    <property type="nucleotide sequence ID" value="NC_005085.1"/>
</dbReference>
<dbReference type="SMR" id="Q7P1R4"/>
<dbReference type="STRING" id="243365.CV_0149"/>
<dbReference type="GeneID" id="66365961"/>
<dbReference type="KEGG" id="cvi:CV_0149"/>
<dbReference type="eggNOG" id="COG0166">
    <property type="taxonomic scope" value="Bacteria"/>
</dbReference>
<dbReference type="HOGENOM" id="CLU_017947_3_1_4"/>
<dbReference type="OrthoDB" id="140919at2"/>
<dbReference type="UniPathway" id="UPA00109">
    <property type="reaction ID" value="UER00181"/>
</dbReference>
<dbReference type="UniPathway" id="UPA00138"/>
<dbReference type="Proteomes" id="UP000001424">
    <property type="component" value="Chromosome"/>
</dbReference>
<dbReference type="GO" id="GO:0005829">
    <property type="term" value="C:cytosol"/>
    <property type="evidence" value="ECO:0007669"/>
    <property type="project" value="TreeGrafter"/>
</dbReference>
<dbReference type="GO" id="GO:0097367">
    <property type="term" value="F:carbohydrate derivative binding"/>
    <property type="evidence" value="ECO:0007669"/>
    <property type="project" value="InterPro"/>
</dbReference>
<dbReference type="GO" id="GO:0004347">
    <property type="term" value="F:glucose-6-phosphate isomerase activity"/>
    <property type="evidence" value="ECO:0007669"/>
    <property type="project" value="UniProtKB-UniRule"/>
</dbReference>
<dbReference type="GO" id="GO:0048029">
    <property type="term" value="F:monosaccharide binding"/>
    <property type="evidence" value="ECO:0007669"/>
    <property type="project" value="TreeGrafter"/>
</dbReference>
<dbReference type="GO" id="GO:0006094">
    <property type="term" value="P:gluconeogenesis"/>
    <property type="evidence" value="ECO:0007669"/>
    <property type="project" value="UniProtKB-UniRule"/>
</dbReference>
<dbReference type="GO" id="GO:0051156">
    <property type="term" value="P:glucose 6-phosphate metabolic process"/>
    <property type="evidence" value="ECO:0007669"/>
    <property type="project" value="TreeGrafter"/>
</dbReference>
<dbReference type="GO" id="GO:0006096">
    <property type="term" value="P:glycolytic process"/>
    <property type="evidence" value="ECO:0007669"/>
    <property type="project" value="UniProtKB-UniRule"/>
</dbReference>
<dbReference type="CDD" id="cd05015">
    <property type="entry name" value="SIS_PGI_1"/>
    <property type="match status" value="1"/>
</dbReference>
<dbReference type="CDD" id="cd05016">
    <property type="entry name" value="SIS_PGI_2"/>
    <property type="match status" value="1"/>
</dbReference>
<dbReference type="FunFam" id="1.10.1390.10:FF:000001">
    <property type="entry name" value="Glucose-6-phosphate isomerase"/>
    <property type="match status" value="1"/>
</dbReference>
<dbReference type="FunFam" id="3.40.50.10490:FF:000004">
    <property type="entry name" value="Glucose-6-phosphate isomerase"/>
    <property type="match status" value="1"/>
</dbReference>
<dbReference type="Gene3D" id="1.10.1390.10">
    <property type="match status" value="1"/>
</dbReference>
<dbReference type="Gene3D" id="3.40.50.10490">
    <property type="entry name" value="Glucose-6-phosphate isomerase like protein, domain 1"/>
    <property type="match status" value="2"/>
</dbReference>
<dbReference type="HAMAP" id="MF_00473">
    <property type="entry name" value="G6P_isomerase"/>
    <property type="match status" value="1"/>
</dbReference>
<dbReference type="InterPro" id="IPR001672">
    <property type="entry name" value="G6P_Isomerase"/>
</dbReference>
<dbReference type="InterPro" id="IPR023096">
    <property type="entry name" value="G6P_Isomerase_C"/>
</dbReference>
<dbReference type="InterPro" id="IPR018189">
    <property type="entry name" value="Phosphoglucose_isomerase_CS"/>
</dbReference>
<dbReference type="InterPro" id="IPR046348">
    <property type="entry name" value="SIS_dom_sf"/>
</dbReference>
<dbReference type="InterPro" id="IPR035476">
    <property type="entry name" value="SIS_PGI_1"/>
</dbReference>
<dbReference type="InterPro" id="IPR035482">
    <property type="entry name" value="SIS_PGI_2"/>
</dbReference>
<dbReference type="NCBIfam" id="NF001211">
    <property type="entry name" value="PRK00179.1"/>
    <property type="match status" value="1"/>
</dbReference>
<dbReference type="PANTHER" id="PTHR11469">
    <property type="entry name" value="GLUCOSE-6-PHOSPHATE ISOMERASE"/>
    <property type="match status" value="1"/>
</dbReference>
<dbReference type="PANTHER" id="PTHR11469:SF1">
    <property type="entry name" value="GLUCOSE-6-PHOSPHATE ISOMERASE"/>
    <property type="match status" value="1"/>
</dbReference>
<dbReference type="Pfam" id="PF00342">
    <property type="entry name" value="PGI"/>
    <property type="match status" value="1"/>
</dbReference>
<dbReference type="PRINTS" id="PR00662">
    <property type="entry name" value="G6PISOMERASE"/>
</dbReference>
<dbReference type="SUPFAM" id="SSF53697">
    <property type="entry name" value="SIS domain"/>
    <property type="match status" value="1"/>
</dbReference>
<dbReference type="PROSITE" id="PS00765">
    <property type="entry name" value="P_GLUCOSE_ISOMERASE_1"/>
    <property type="match status" value="1"/>
</dbReference>
<dbReference type="PROSITE" id="PS00174">
    <property type="entry name" value="P_GLUCOSE_ISOMERASE_2"/>
    <property type="match status" value="1"/>
</dbReference>
<dbReference type="PROSITE" id="PS51463">
    <property type="entry name" value="P_GLUCOSE_ISOMERASE_3"/>
    <property type="match status" value="1"/>
</dbReference>
<feature type="chain" id="PRO_0000180624" description="Glucose-6-phosphate isomerase 1">
    <location>
        <begin position="1"/>
        <end position="547"/>
    </location>
</feature>
<feature type="active site" description="Proton donor" evidence="1">
    <location>
        <position position="353"/>
    </location>
</feature>
<feature type="active site" evidence="1">
    <location>
        <position position="384"/>
    </location>
</feature>
<feature type="active site" evidence="1">
    <location>
        <position position="512"/>
    </location>
</feature>
<keyword id="KW-0963">Cytoplasm</keyword>
<keyword id="KW-0312">Gluconeogenesis</keyword>
<keyword id="KW-0324">Glycolysis</keyword>
<keyword id="KW-0413">Isomerase</keyword>
<keyword id="KW-1185">Reference proteome</keyword>
<evidence type="ECO:0000255" key="1">
    <source>
        <dbReference type="HAMAP-Rule" id="MF_00473"/>
    </source>
</evidence>
<reference key="1">
    <citation type="journal article" date="2003" name="Proc. Natl. Acad. Sci. U.S.A.">
        <title>The complete genome sequence of Chromobacterium violaceum reveals remarkable and exploitable bacterial adaptability.</title>
        <authorList>
            <person name="Vasconcelos A.T.R."/>
            <person name="de Almeida D.F."/>
            <person name="Hungria M."/>
            <person name="Guimaraes C.T."/>
            <person name="Antonio R.V."/>
            <person name="Almeida F.C."/>
            <person name="de Almeida L.G.P."/>
            <person name="de Almeida R."/>
            <person name="Alves-Gomes J.A."/>
            <person name="Andrade E.M."/>
            <person name="Araripe J."/>
            <person name="de Araujo M.F.F."/>
            <person name="Astolfi-Filho S."/>
            <person name="Azevedo V."/>
            <person name="Baptista A.J."/>
            <person name="Bataus L.A.M."/>
            <person name="Batista J.S."/>
            <person name="Belo A."/>
            <person name="van den Berg C."/>
            <person name="Bogo M."/>
            <person name="Bonatto S."/>
            <person name="Bordignon J."/>
            <person name="Brigido M.M."/>
            <person name="Brito C.A."/>
            <person name="Brocchi M."/>
            <person name="Burity H.A."/>
            <person name="Camargo A.A."/>
            <person name="Cardoso D.D.P."/>
            <person name="Carneiro N.P."/>
            <person name="Carraro D.M."/>
            <person name="Carvalho C.M.B."/>
            <person name="Cascardo J.C.M."/>
            <person name="Cavada B.S."/>
            <person name="Chueire L.M.O."/>
            <person name="Creczynski-Pasa T.B."/>
            <person name="Cunha-Junior N.C."/>
            <person name="Fagundes N."/>
            <person name="Falcao C.L."/>
            <person name="Fantinatti F."/>
            <person name="Farias I.P."/>
            <person name="Felipe M.S.S."/>
            <person name="Ferrari L.P."/>
            <person name="Ferro J.A."/>
            <person name="Ferro M.I.T."/>
            <person name="Franco G.R."/>
            <person name="Freitas N.S.A."/>
            <person name="Furlan L.R."/>
            <person name="Gazzinelli R.T."/>
            <person name="Gomes E.A."/>
            <person name="Goncalves P.R."/>
            <person name="Grangeiro T.B."/>
            <person name="Grattapaglia D."/>
            <person name="Grisard E.C."/>
            <person name="Hanna E.S."/>
            <person name="Jardim S.N."/>
            <person name="Laurino J."/>
            <person name="Leoi L.C.T."/>
            <person name="Lima L.F.A."/>
            <person name="Loureiro M.F."/>
            <person name="Lyra M.C.C.P."/>
            <person name="Madeira H.M.F."/>
            <person name="Manfio G.P."/>
            <person name="Maranhao A.Q."/>
            <person name="Martins W.S."/>
            <person name="di Mauro S.M.Z."/>
            <person name="de Medeiros S.R.B."/>
            <person name="Meissner R.V."/>
            <person name="Moreira M.A.M."/>
            <person name="Nascimento F.F."/>
            <person name="Nicolas M.F."/>
            <person name="Oliveira J.G."/>
            <person name="Oliveira S.C."/>
            <person name="Paixao R.F.C."/>
            <person name="Parente J.A."/>
            <person name="Pedrosa F.O."/>
            <person name="Pena S.D.J."/>
            <person name="Pereira J.O."/>
            <person name="Pereira M."/>
            <person name="Pinto L.S.R.C."/>
            <person name="Pinto L.S."/>
            <person name="Porto J.I.R."/>
            <person name="Potrich D.P."/>
            <person name="Ramalho-Neto C.E."/>
            <person name="Reis A.M.M."/>
            <person name="Rigo L.U."/>
            <person name="Rondinelli E."/>
            <person name="Santos E.B.P."/>
            <person name="Santos F.R."/>
            <person name="Schneider M.P.C."/>
            <person name="Seuanez H.N."/>
            <person name="Silva A.M.R."/>
            <person name="da Silva A.L.C."/>
            <person name="Silva D.W."/>
            <person name="Silva R."/>
            <person name="Simoes I.C."/>
            <person name="Simon D."/>
            <person name="Soares C.M.A."/>
            <person name="Soares R.B.A."/>
            <person name="Souza E.M."/>
            <person name="Souza K.R.L."/>
            <person name="Souza R.C."/>
            <person name="Steffens M.B.R."/>
            <person name="Steindel M."/>
            <person name="Teixeira S.R."/>
            <person name="Urmenyi T."/>
            <person name="Vettore A."/>
            <person name="Wassem R."/>
            <person name="Zaha A."/>
            <person name="Simpson A.J.G."/>
        </authorList>
    </citation>
    <scope>NUCLEOTIDE SEQUENCE [LARGE SCALE GENOMIC DNA]</scope>
    <source>
        <strain>ATCC 12472 / DSM 30191 / JCM 1249 / CCUG 213 / NBRC 12614 / NCIMB 9131 / NCTC 9757 / MK</strain>
    </source>
</reference>